<organism>
    <name type="scientific">Lactobacillus johnsonii (strain CNCM I-12250 / La1 / NCC 533)</name>
    <dbReference type="NCBI Taxonomy" id="257314"/>
    <lineage>
        <taxon>Bacteria</taxon>
        <taxon>Bacillati</taxon>
        <taxon>Bacillota</taxon>
        <taxon>Bacilli</taxon>
        <taxon>Lactobacillales</taxon>
        <taxon>Lactobacillaceae</taxon>
        <taxon>Lactobacillus</taxon>
    </lineage>
</organism>
<evidence type="ECO:0000255" key="1">
    <source>
        <dbReference type="HAMAP-Rule" id="MF_00096"/>
    </source>
</evidence>
<accession>P61668</accession>
<dbReference type="EMBL" id="AE017198">
    <property type="protein sequence ID" value="AAS08457.1"/>
    <property type="molecule type" value="Genomic_DNA"/>
</dbReference>
<dbReference type="RefSeq" id="WP_011161602.1">
    <property type="nucleotide sequence ID" value="NC_005362.1"/>
</dbReference>
<dbReference type="SMR" id="P61668"/>
<dbReference type="KEGG" id="ljo:LJ_0465"/>
<dbReference type="eggNOG" id="COG0249">
    <property type="taxonomic scope" value="Bacteria"/>
</dbReference>
<dbReference type="HOGENOM" id="CLU_002472_4_0_9"/>
<dbReference type="Proteomes" id="UP000000581">
    <property type="component" value="Chromosome"/>
</dbReference>
<dbReference type="GO" id="GO:0005829">
    <property type="term" value="C:cytosol"/>
    <property type="evidence" value="ECO:0007669"/>
    <property type="project" value="TreeGrafter"/>
</dbReference>
<dbReference type="GO" id="GO:0005524">
    <property type="term" value="F:ATP binding"/>
    <property type="evidence" value="ECO:0007669"/>
    <property type="project" value="UniProtKB-UniRule"/>
</dbReference>
<dbReference type="GO" id="GO:0140664">
    <property type="term" value="F:ATP-dependent DNA damage sensor activity"/>
    <property type="evidence" value="ECO:0007669"/>
    <property type="project" value="InterPro"/>
</dbReference>
<dbReference type="GO" id="GO:0003684">
    <property type="term" value="F:damaged DNA binding"/>
    <property type="evidence" value="ECO:0007669"/>
    <property type="project" value="UniProtKB-UniRule"/>
</dbReference>
<dbReference type="GO" id="GO:0030983">
    <property type="term" value="F:mismatched DNA binding"/>
    <property type="evidence" value="ECO:0007669"/>
    <property type="project" value="InterPro"/>
</dbReference>
<dbReference type="GO" id="GO:0006298">
    <property type="term" value="P:mismatch repair"/>
    <property type="evidence" value="ECO:0007669"/>
    <property type="project" value="UniProtKB-UniRule"/>
</dbReference>
<dbReference type="CDD" id="cd03284">
    <property type="entry name" value="ABC_MutS1"/>
    <property type="match status" value="1"/>
</dbReference>
<dbReference type="FunFam" id="1.10.1420.10:FF:000001">
    <property type="entry name" value="DNA mismatch repair protein MutS"/>
    <property type="match status" value="1"/>
</dbReference>
<dbReference type="FunFam" id="3.40.1170.10:FF:000001">
    <property type="entry name" value="DNA mismatch repair protein MutS"/>
    <property type="match status" value="1"/>
</dbReference>
<dbReference type="FunFam" id="3.40.50.300:FF:000870">
    <property type="entry name" value="MutS protein homolog 4"/>
    <property type="match status" value="1"/>
</dbReference>
<dbReference type="Gene3D" id="1.10.1420.10">
    <property type="match status" value="2"/>
</dbReference>
<dbReference type="Gene3D" id="3.40.1170.10">
    <property type="entry name" value="DNA repair protein MutS, domain I"/>
    <property type="match status" value="1"/>
</dbReference>
<dbReference type="Gene3D" id="3.30.420.110">
    <property type="entry name" value="MutS, connector domain"/>
    <property type="match status" value="1"/>
</dbReference>
<dbReference type="Gene3D" id="3.40.50.300">
    <property type="entry name" value="P-loop containing nucleotide triphosphate hydrolases"/>
    <property type="match status" value="1"/>
</dbReference>
<dbReference type="HAMAP" id="MF_00096">
    <property type="entry name" value="MutS"/>
    <property type="match status" value="1"/>
</dbReference>
<dbReference type="InterPro" id="IPR005748">
    <property type="entry name" value="DNA_mismatch_repair_MutS"/>
</dbReference>
<dbReference type="InterPro" id="IPR007695">
    <property type="entry name" value="DNA_mismatch_repair_MutS-lik_N"/>
</dbReference>
<dbReference type="InterPro" id="IPR017261">
    <property type="entry name" value="DNA_mismatch_repair_MutS/MSH"/>
</dbReference>
<dbReference type="InterPro" id="IPR000432">
    <property type="entry name" value="DNA_mismatch_repair_MutS_C"/>
</dbReference>
<dbReference type="InterPro" id="IPR007861">
    <property type="entry name" value="DNA_mismatch_repair_MutS_clamp"/>
</dbReference>
<dbReference type="InterPro" id="IPR007696">
    <property type="entry name" value="DNA_mismatch_repair_MutS_core"/>
</dbReference>
<dbReference type="InterPro" id="IPR016151">
    <property type="entry name" value="DNA_mismatch_repair_MutS_N"/>
</dbReference>
<dbReference type="InterPro" id="IPR036187">
    <property type="entry name" value="DNA_mismatch_repair_MutS_sf"/>
</dbReference>
<dbReference type="InterPro" id="IPR007860">
    <property type="entry name" value="DNA_mmatch_repair_MutS_con_dom"/>
</dbReference>
<dbReference type="InterPro" id="IPR045076">
    <property type="entry name" value="MutS"/>
</dbReference>
<dbReference type="InterPro" id="IPR036678">
    <property type="entry name" value="MutS_con_dom_sf"/>
</dbReference>
<dbReference type="InterPro" id="IPR027417">
    <property type="entry name" value="P-loop_NTPase"/>
</dbReference>
<dbReference type="NCBIfam" id="TIGR01070">
    <property type="entry name" value="mutS1"/>
    <property type="match status" value="1"/>
</dbReference>
<dbReference type="NCBIfam" id="NF003810">
    <property type="entry name" value="PRK05399.1"/>
    <property type="match status" value="1"/>
</dbReference>
<dbReference type="PANTHER" id="PTHR11361:SF34">
    <property type="entry name" value="DNA MISMATCH REPAIR PROTEIN MSH1, MITOCHONDRIAL"/>
    <property type="match status" value="1"/>
</dbReference>
<dbReference type="PANTHER" id="PTHR11361">
    <property type="entry name" value="DNA MISMATCH REPAIR PROTEIN MUTS FAMILY MEMBER"/>
    <property type="match status" value="1"/>
</dbReference>
<dbReference type="Pfam" id="PF01624">
    <property type="entry name" value="MutS_I"/>
    <property type="match status" value="1"/>
</dbReference>
<dbReference type="Pfam" id="PF05188">
    <property type="entry name" value="MutS_II"/>
    <property type="match status" value="1"/>
</dbReference>
<dbReference type="Pfam" id="PF05192">
    <property type="entry name" value="MutS_III"/>
    <property type="match status" value="1"/>
</dbReference>
<dbReference type="Pfam" id="PF05190">
    <property type="entry name" value="MutS_IV"/>
    <property type="match status" value="1"/>
</dbReference>
<dbReference type="Pfam" id="PF00488">
    <property type="entry name" value="MutS_V"/>
    <property type="match status" value="1"/>
</dbReference>
<dbReference type="PIRSF" id="PIRSF037677">
    <property type="entry name" value="DNA_mis_repair_Msh6"/>
    <property type="match status" value="1"/>
</dbReference>
<dbReference type="SMART" id="SM00534">
    <property type="entry name" value="MUTSac"/>
    <property type="match status" value="1"/>
</dbReference>
<dbReference type="SMART" id="SM00533">
    <property type="entry name" value="MUTSd"/>
    <property type="match status" value="1"/>
</dbReference>
<dbReference type="SUPFAM" id="SSF55271">
    <property type="entry name" value="DNA repair protein MutS, domain I"/>
    <property type="match status" value="1"/>
</dbReference>
<dbReference type="SUPFAM" id="SSF53150">
    <property type="entry name" value="DNA repair protein MutS, domain II"/>
    <property type="match status" value="1"/>
</dbReference>
<dbReference type="SUPFAM" id="SSF48334">
    <property type="entry name" value="DNA repair protein MutS, domain III"/>
    <property type="match status" value="1"/>
</dbReference>
<dbReference type="SUPFAM" id="SSF52540">
    <property type="entry name" value="P-loop containing nucleoside triphosphate hydrolases"/>
    <property type="match status" value="1"/>
</dbReference>
<dbReference type="PROSITE" id="PS00486">
    <property type="entry name" value="DNA_MISMATCH_REPAIR_2"/>
    <property type="match status" value="1"/>
</dbReference>
<proteinExistence type="inferred from homology"/>
<protein>
    <recommendedName>
        <fullName evidence="1">DNA mismatch repair protein MutS</fullName>
    </recommendedName>
</protein>
<sequence length="857" mass="96000">MAKKDTTPMMKQYYEIKEQYPDAFLFYRVGDFYELFEDDAIKGAQILELTLTHRSNKTKNPIPMAGVPHLAVDTYVNTLVEKGYKVALCEQLEDPKKAKGMVKRGIIQLITPGTMMQERPDQAKDSNYLTSVISTNSGFGLAYSDLSTGETFSTHLADFEAVANELLSLQTREVVYNGHLTDLNKDFLKKANITVSEPVEVEGEHAEISYVAQNLTDDAEIKATKQLVAYLLSTQKRSLAHLQVAQSYEPTQYLQMSHTVQTNLELIKSAKTSKKMGSLFWLLDKTSTAMGGRLLKSWIERPLLSVTEITRRQEMVQALLDDYFTREKVIDSLKGVYDLERLTGRIAFGSVNAREMLQLAHSLGAIPEILNALLETNNPHLQNFAKQIDPLKGIHDLIVNTIVDNPPLPTTEGGLIREGVSEQLDRYRDAMNNGKKWLSEMESHEREVTGINNLKVGYNKVFGYYIEVTNSNKSKVPTDRYTRKQTLTNAERYITPDLKEHEALILEAEAKSTGLEYDLFVKLREDVKKYIPALQKLAKQIASLDVLTNFATVSEQNNYVRPNFVTDKQEINVVNGRHPVVEQVMTAGSYIPNDVKMDQDTNIFLITGPNMSGKSTYMRQMALIAIMAQIGSFVPADSATLPIFDQIFTRIGAADDLISGQSTFMVEMSEANDALQHATKRSLVLFDEIGRGTATYDGMALAGAIVKYLHDKVGAKALFATHYHELTDLDQTLKHLKNIHVGATEENGKLIFLHKILPGPADQSYGIHVAQLAGLPHKVLREATTMLKRLEKQGASELQPASEQLDLFVPEEASAPAISDDEKDVLDEIQNVYLADKTPLQVMELVAQWQQELKDKD</sequence>
<feature type="chain" id="PRO_0000115103" description="DNA mismatch repair protein MutS">
    <location>
        <begin position="1"/>
        <end position="857"/>
    </location>
</feature>
<feature type="binding site" evidence="1">
    <location>
        <begin position="608"/>
        <end position="615"/>
    </location>
    <ligand>
        <name>ATP</name>
        <dbReference type="ChEBI" id="CHEBI:30616"/>
    </ligand>
</feature>
<keyword id="KW-0067">ATP-binding</keyword>
<keyword id="KW-0227">DNA damage</keyword>
<keyword id="KW-0234">DNA repair</keyword>
<keyword id="KW-0238">DNA-binding</keyword>
<keyword id="KW-0547">Nucleotide-binding</keyword>
<comment type="function">
    <text evidence="1">This protein is involved in the repair of mismatches in DNA. It is possible that it carries out the mismatch recognition step. This protein has a weak ATPase activity.</text>
</comment>
<comment type="similarity">
    <text evidence="1">Belongs to the DNA mismatch repair MutS family.</text>
</comment>
<name>MUTS_LACJO</name>
<gene>
    <name evidence="1" type="primary">mutS</name>
    <name type="ordered locus">LJ_0465</name>
</gene>
<reference key="1">
    <citation type="journal article" date="2004" name="Proc. Natl. Acad. Sci. U.S.A.">
        <title>The genome sequence of the probiotic intestinal bacterium Lactobacillus johnsonii NCC 533.</title>
        <authorList>
            <person name="Pridmore R.D."/>
            <person name="Berger B."/>
            <person name="Desiere F."/>
            <person name="Vilanova D."/>
            <person name="Barretto C."/>
            <person name="Pittet A.-C."/>
            <person name="Zwahlen M.-C."/>
            <person name="Rouvet M."/>
            <person name="Altermann E."/>
            <person name="Barrangou R."/>
            <person name="Mollet B."/>
            <person name="Mercenier A."/>
            <person name="Klaenhammer T."/>
            <person name="Arigoni F."/>
            <person name="Schell M.A."/>
        </authorList>
    </citation>
    <scope>NUCLEOTIDE SEQUENCE [LARGE SCALE GENOMIC DNA]</scope>
    <source>
        <strain>CNCM I-1225 / La1 / NCC 533</strain>
    </source>
</reference>